<organism>
    <name type="scientific">Yersinia pestis bv. Antiqua (strain Antiqua)</name>
    <dbReference type="NCBI Taxonomy" id="360102"/>
    <lineage>
        <taxon>Bacteria</taxon>
        <taxon>Pseudomonadati</taxon>
        <taxon>Pseudomonadota</taxon>
        <taxon>Gammaproteobacteria</taxon>
        <taxon>Enterobacterales</taxon>
        <taxon>Yersiniaceae</taxon>
        <taxon>Yersinia</taxon>
    </lineage>
</organism>
<gene>
    <name evidence="1" type="primary">luxS</name>
    <name type="ordered locus">YPA_2844</name>
</gene>
<keyword id="KW-0071">Autoinducer synthesis</keyword>
<keyword id="KW-0408">Iron</keyword>
<keyword id="KW-0456">Lyase</keyword>
<keyword id="KW-0479">Metal-binding</keyword>
<keyword id="KW-0673">Quorum sensing</keyword>
<name>LUXS_YERPA</name>
<comment type="function">
    <text evidence="1">Involved in the synthesis of autoinducer 2 (AI-2) which is secreted by bacteria and is used to communicate both the cell density and the metabolic potential of the environment. The regulation of gene expression in response to changes in cell density is called quorum sensing. Catalyzes the transformation of S-ribosylhomocysteine (RHC) to homocysteine (HC) and 4,5-dihydroxy-2,3-pentadione (DPD).</text>
</comment>
<comment type="catalytic activity">
    <reaction evidence="1">
        <text>S-(5-deoxy-D-ribos-5-yl)-L-homocysteine = (S)-4,5-dihydroxypentane-2,3-dione + L-homocysteine</text>
        <dbReference type="Rhea" id="RHEA:17753"/>
        <dbReference type="ChEBI" id="CHEBI:29484"/>
        <dbReference type="ChEBI" id="CHEBI:58195"/>
        <dbReference type="ChEBI" id="CHEBI:58199"/>
        <dbReference type="EC" id="4.4.1.21"/>
    </reaction>
</comment>
<comment type="cofactor">
    <cofactor evidence="1">
        <name>Fe cation</name>
        <dbReference type="ChEBI" id="CHEBI:24875"/>
    </cofactor>
    <text evidence="1">Binds 1 Fe cation per subunit.</text>
</comment>
<comment type="subunit">
    <text evidence="1">Homodimer.</text>
</comment>
<comment type="similarity">
    <text evidence="1">Belongs to the LuxS family.</text>
</comment>
<protein>
    <recommendedName>
        <fullName evidence="1">S-ribosylhomocysteine lyase</fullName>
        <ecNumber evidence="1">4.4.1.21</ecNumber>
    </recommendedName>
    <alternativeName>
        <fullName evidence="1">AI-2 synthesis protein</fullName>
    </alternativeName>
    <alternativeName>
        <fullName evidence="1">Autoinducer-2 production protein LuxS</fullName>
    </alternativeName>
</protein>
<proteinExistence type="inferred from homology"/>
<reference key="1">
    <citation type="journal article" date="2006" name="J. Bacteriol.">
        <title>Complete genome sequence of Yersinia pestis strains Antiqua and Nepal516: evidence of gene reduction in an emerging pathogen.</title>
        <authorList>
            <person name="Chain P.S.G."/>
            <person name="Hu P."/>
            <person name="Malfatti S.A."/>
            <person name="Radnedge L."/>
            <person name="Larimer F."/>
            <person name="Vergez L.M."/>
            <person name="Worsham P."/>
            <person name="Chu M.C."/>
            <person name="Andersen G.L."/>
        </authorList>
    </citation>
    <scope>NUCLEOTIDE SEQUENCE [LARGE SCALE GENOMIC DNA]</scope>
    <source>
        <strain>Antiqua</strain>
    </source>
</reference>
<accession>Q1C416</accession>
<evidence type="ECO:0000255" key="1">
    <source>
        <dbReference type="HAMAP-Rule" id="MF_00091"/>
    </source>
</evidence>
<feature type="chain" id="PRO_0000298058" description="S-ribosylhomocysteine lyase">
    <location>
        <begin position="1"/>
        <end position="171"/>
    </location>
</feature>
<feature type="binding site" evidence="1">
    <location>
        <position position="54"/>
    </location>
    <ligand>
        <name>Fe cation</name>
        <dbReference type="ChEBI" id="CHEBI:24875"/>
    </ligand>
</feature>
<feature type="binding site" evidence="1">
    <location>
        <position position="58"/>
    </location>
    <ligand>
        <name>Fe cation</name>
        <dbReference type="ChEBI" id="CHEBI:24875"/>
    </ligand>
</feature>
<feature type="binding site" evidence="1">
    <location>
        <position position="128"/>
    </location>
    <ligand>
        <name>Fe cation</name>
        <dbReference type="ChEBI" id="CHEBI:24875"/>
    </ligand>
</feature>
<dbReference type="EC" id="4.4.1.21" evidence="1"/>
<dbReference type="EMBL" id="CP000308">
    <property type="protein sequence ID" value="ABG14806.1"/>
    <property type="molecule type" value="Genomic_DNA"/>
</dbReference>
<dbReference type="RefSeq" id="WP_002209453.1">
    <property type="nucleotide sequence ID" value="NZ_CP009906.1"/>
</dbReference>
<dbReference type="SMR" id="Q1C416"/>
<dbReference type="GeneID" id="57975413"/>
<dbReference type="KEGG" id="ypa:YPA_2844"/>
<dbReference type="Proteomes" id="UP000001971">
    <property type="component" value="Chromosome"/>
</dbReference>
<dbReference type="GO" id="GO:0005506">
    <property type="term" value="F:iron ion binding"/>
    <property type="evidence" value="ECO:0007669"/>
    <property type="project" value="InterPro"/>
</dbReference>
<dbReference type="GO" id="GO:0043768">
    <property type="term" value="F:S-ribosylhomocysteine lyase activity"/>
    <property type="evidence" value="ECO:0007669"/>
    <property type="project" value="UniProtKB-UniRule"/>
</dbReference>
<dbReference type="GO" id="GO:0009372">
    <property type="term" value="P:quorum sensing"/>
    <property type="evidence" value="ECO:0007669"/>
    <property type="project" value="UniProtKB-UniRule"/>
</dbReference>
<dbReference type="FunFam" id="3.30.1360.80:FF:000001">
    <property type="entry name" value="S-ribosylhomocysteine lyase"/>
    <property type="match status" value="1"/>
</dbReference>
<dbReference type="Gene3D" id="3.30.1360.80">
    <property type="entry name" value="S-ribosylhomocysteinase (LuxS)"/>
    <property type="match status" value="1"/>
</dbReference>
<dbReference type="HAMAP" id="MF_00091">
    <property type="entry name" value="LuxS"/>
    <property type="match status" value="1"/>
</dbReference>
<dbReference type="InterPro" id="IPR037005">
    <property type="entry name" value="LuxS_sf"/>
</dbReference>
<dbReference type="InterPro" id="IPR011249">
    <property type="entry name" value="Metalloenz_LuxS/M16"/>
</dbReference>
<dbReference type="InterPro" id="IPR003815">
    <property type="entry name" value="S-ribosylhomocysteinase"/>
</dbReference>
<dbReference type="NCBIfam" id="NF002602">
    <property type="entry name" value="PRK02260.1-2"/>
    <property type="match status" value="1"/>
</dbReference>
<dbReference type="PANTHER" id="PTHR35799">
    <property type="entry name" value="S-RIBOSYLHOMOCYSTEINE LYASE"/>
    <property type="match status" value="1"/>
</dbReference>
<dbReference type="PANTHER" id="PTHR35799:SF1">
    <property type="entry name" value="S-RIBOSYLHOMOCYSTEINE LYASE"/>
    <property type="match status" value="1"/>
</dbReference>
<dbReference type="Pfam" id="PF02664">
    <property type="entry name" value="LuxS"/>
    <property type="match status" value="1"/>
</dbReference>
<dbReference type="PIRSF" id="PIRSF006160">
    <property type="entry name" value="AI2"/>
    <property type="match status" value="1"/>
</dbReference>
<dbReference type="PRINTS" id="PR01487">
    <property type="entry name" value="LUXSPROTEIN"/>
</dbReference>
<dbReference type="SUPFAM" id="SSF63411">
    <property type="entry name" value="LuxS/MPP-like metallohydrolase"/>
    <property type="match status" value="1"/>
</dbReference>
<sequence>MPLLDSFTVDHTIMKAPAVRVAKTMKTPHGDEITVFDLRFCVPNKEVMPEKGIHTLEHLFAGFMRDHLNGDGVEIIDISPMGCRTGFYMSLIGTPDEQRVADAWKAAMADVLKVTDQRKIPELNEYQCGTYHMHSLEEAQSIAKDILDRDVRINHNEELALPKEKLTELHI</sequence>